<protein>
    <recommendedName>
        <fullName evidence="1">UPF0266 membrane protein YobD</fullName>
    </recommendedName>
</protein>
<feature type="chain" id="PRO_1000084496" description="UPF0266 membrane protein YobD">
    <location>
        <begin position="1"/>
        <end position="152"/>
    </location>
</feature>
<feature type="transmembrane region" description="Helical" evidence="1">
    <location>
        <begin position="6"/>
        <end position="26"/>
    </location>
</feature>
<feature type="transmembrane region" description="Helical" evidence="1">
    <location>
        <begin position="45"/>
        <end position="65"/>
    </location>
</feature>
<feature type="transmembrane region" description="Helical" evidence="1">
    <location>
        <begin position="67"/>
        <end position="87"/>
    </location>
</feature>
<dbReference type="EMBL" id="CP000946">
    <property type="protein sequence ID" value="ACA77462.1"/>
    <property type="molecule type" value="Genomic_DNA"/>
</dbReference>
<dbReference type="RefSeq" id="WP_000156255.1">
    <property type="nucleotide sequence ID" value="NZ_MTFT01000011.1"/>
</dbReference>
<dbReference type="KEGG" id="ecl:EcolC_1812"/>
<dbReference type="HOGENOM" id="CLU_133645_0_0_6"/>
<dbReference type="GO" id="GO:0005886">
    <property type="term" value="C:plasma membrane"/>
    <property type="evidence" value="ECO:0007669"/>
    <property type="project" value="UniProtKB-SubCell"/>
</dbReference>
<dbReference type="HAMAP" id="MF_01071">
    <property type="entry name" value="UPF0266"/>
    <property type="match status" value="1"/>
</dbReference>
<dbReference type="InterPro" id="IPR009328">
    <property type="entry name" value="DUF986"/>
</dbReference>
<dbReference type="NCBIfam" id="NF002791">
    <property type="entry name" value="PRK02913.1"/>
    <property type="match status" value="1"/>
</dbReference>
<dbReference type="Pfam" id="PF06173">
    <property type="entry name" value="DUF986"/>
    <property type="match status" value="1"/>
</dbReference>
<dbReference type="PIRSF" id="PIRSF020687">
    <property type="entry name" value="UCP020687"/>
    <property type="match status" value="1"/>
</dbReference>
<accession>B1J0R8</accession>
<proteinExistence type="inferred from homology"/>
<keyword id="KW-0997">Cell inner membrane</keyword>
<keyword id="KW-1003">Cell membrane</keyword>
<keyword id="KW-0472">Membrane</keyword>
<keyword id="KW-0812">Transmembrane</keyword>
<keyword id="KW-1133">Transmembrane helix</keyword>
<evidence type="ECO:0000255" key="1">
    <source>
        <dbReference type="HAMAP-Rule" id="MF_01071"/>
    </source>
</evidence>
<reference key="1">
    <citation type="submission" date="2008-02" db="EMBL/GenBank/DDBJ databases">
        <title>Complete sequence of Escherichia coli C str. ATCC 8739.</title>
        <authorList>
            <person name="Copeland A."/>
            <person name="Lucas S."/>
            <person name="Lapidus A."/>
            <person name="Glavina del Rio T."/>
            <person name="Dalin E."/>
            <person name="Tice H."/>
            <person name="Bruce D."/>
            <person name="Goodwin L."/>
            <person name="Pitluck S."/>
            <person name="Kiss H."/>
            <person name="Brettin T."/>
            <person name="Detter J.C."/>
            <person name="Han C."/>
            <person name="Kuske C.R."/>
            <person name="Schmutz J."/>
            <person name="Larimer F."/>
            <person name="Land M."/>
            <person name="Hauser L."/>
            <person name="Kyrpides N."/>
            <person name="Mikhailova N."/>
            <person name="Ingram L."/>
            <person name="Richardson P."/>
        </authorList>
    </citation>
    <scope>NUCLEOTIDE SEQUENCE [LARGE SCALE GENOMIC DNA]</scope>
    <source>
        <strain>ATCC 8739 / DSM 1576 / NBRC 3972 / NCIMB 8545 / WDCM 00012 / Crooks</strain>
    </source>
</reference>
<gene>
    <name evidence="1" type="primary">yobD</name>
    <name type="ordered locus">EcolC_1812</name>
</gene>
<comment type="subcellular location">
    <subcellularLocation>
        <location evidence="1">Cell inner membrane</location>
        <topology evidence="1">Multi-pass membrane protein</topology>
    </subcellularLocation>
</comment>
<comment type="similarity">
    <text evidence="1">Belongs to the UPF0266 family.</text>
</comment>
<organism>
    <name type="scientific">Escherichia coli (strain ATCC 8739 / DSM 1576 / NBRC 3972 / NCIMB 8545 / WDCM 00012 / Crooks)</name>
    <dbReference type="NCBI Taxonomy" id="481805"/>
    <lineage>
        <taxon>Bacteria</taxon>
        <taxon>Pseudomonadati</taxon>
        <taxon>Pseudomonadota</taxon>
        <taxon>Gammaproteobacteria</taxon>
        <taxon>Enterobacterales</taxon>
        <taxon>Enterobacteriaceae</taxon>
        <taxon>Escherichia</taxon>
    </lineage>
</organism>
<sequence length="152" mass="17615">MTITDLVLILFIAALLAFAIYDQFIMPRRNGPTLLAIPLLRRGRIDSVIFVGLIVILIYNNVTNHGALITTWLLSALALMGFYIFWIRVPKIIFKQKGFFFANVWIEYSRIKAMNLSEDGVLVMQLEQRRLLIRVRNIDDLEKIYKLLVSTQ</sequence>
<name>YOBD_ECOLC</name>